<comment type="function">
    <text evidence="1">Involved in endocytosis.</text>
</comment>
<comment type="subcellular location">
    <subcellularLocation>
        <location evidence="1">Cytoplasmic granule</location>
    </subcellularLocation>
    <subcellularLocation>
        <location evidence="1">Cell membrane</location>
        <topology evidence="1">Peripheral membrane protein</topology>
        <orientation evidence="1">Cytoplasmic side</orientation>
    </subcellularLocation>
</comment>
<comment type="similarity">
    <text evidence="2">Belongs to the YPP1 family.</text>
</comment>
<comment type="sequence caution" evidence="2">
    <conflict type="erroneous initiation">
        <sequence resource="EMBL-CDS" id="AAS51115"/>
    </conflict>
</comment>
<evidence type="ECO:0000250" key="1"/>
<evidence type="ECO:0000305" key="2"/>
<gene>
    <name type="primary">YPP1</name>
    <name type="ordered locus">ACL113C</name>
</gene>
<dbReference type="EMBL" id="AE016816">
    <property type="protein sequence ID" value="AAS51115.1"/>
    <property type="status" value="ALT_INIT"/>
    <property type="molecule type" value="Genomic_DNA"/>
</dbReference>
<dbReference type="RefSeq" id="NP_983291.1">
    <property type="nucleotide sequence ID" value="NM_208644.1"/>
</dbReference>
<dbReference type="SMR" id="Q75CN2"/>
<dbReference type="FunCoup" id="Q75CN2">
    <property type="interactions" value="287"/>
</dbReference>
<dbReference type="STRING" id="284811.Q75CN2"/>
<dbReference type="GeneID" id="4619411"/>
<dbReference type="KEGG" id="ago:AGOS_ACL113C"/>
<dbReference type="eggNOG" id="ENOG502QV6B">
    <property type="taxonomic scope" value="Eukaryota"/>
</dbReference>
<dbReference type="InParanoid" id="Q75CN2"/>
<dbReference type="OrthoDB" id="29013at2759"/>
<dbReference type="Proteomes" id="UP000000591">
    <property type="component" value="Chromosome III"/>
</dbReference>
<dbReference type="GO" id="GO:0005886">
    <property type="term" value="C:plasma membrane"/>
    <property type="evidence" value="ECO:0007669"/>
    <property type="project" value="UniProtKB-SubCell"/>
</dbReference>
<dbReference type="GO" id="GO:0006897">
    <property type="term" value="P:endocytosis"/>
    <property type="evidence" value="ECO:0007669"/>
    <property type="project" value="UniProtKB-KW"/>
</dbReference>
<dbReference type="CDD" id="cd23270">
    <property type="entry name" value="YPP1"/>
    <property type="match status" value="1"/>
</dbReference>
<dbReference type="Gene3D" id="1.25.40.10">
    <property type="entry name" value="Tetratricopeptide repeat domain"/>
    <property type="match status" value="1"/>
</dbReference>
<dbReference type="InterPro" id="IPR051722">
    <property type="entry name" value="Endocytosis_PI4K-reg_protein"/>
</dbReference>
<dbReference type="InterPro" id="IPR011990">
    <property type="entry name" value="TPR-like_helical_dom_sf"/>
</dbReference>
<dbReference type="PANTHER" id="PTHR23083:SF464">
    <property type="entry name" value="TETRATRICOPEPTIDE REPEAT DOMAIN 7, ISOFORM A"/>
    <property type="match status" value="1"/>
</dbReference>
<dbReference type="PANTHER" id="PTHR23083">
    <property type="entry name" value="TETRATRICOPEPTIDE REPEAT PROTEIN, TPR"/>
    <property type="match status" value="1"/>
</dbReference>
<dbReference type="SUPFAM" id="SSF48452">
    <property type="entry name" value="TPR-like"/>
    <property type="match status" value="1"/>
</dbReference>
<dbReference type="PROSITE" id="PS50293">
    <property type="entry name" value="TPR_REGION"/>
    <property type="match status" value="1"/>
</dbReference>
<name>YPP1_EREGS</name>
<protein>
    <recommendedName>
        <fullName>Cargo-transport protein YPP1</fullName>
    </recommendedName>
</protein>
<organism>
    <name type="scientific">Eremothecium gossypii (strain ATCC 10895 / CBS 109.51 / FGSC 9923 / NRRL Y-1056)</name>
    <name type="common">Yeast</name>
    <name type="synonym">Ashbya gossypii</name>
    <dbReference type="NCBI Taxonomy" id="284811"/>
    <lineage>
        <taxon>Eukaryota</taxon>
        <taxon>Fungi</taxon>
        <taxon>Dikarya</taxon>
        <taxon>Ascomycota</taxon>
        <taxon>Saccharomycotina</taxon>
        <taxon>Saccharomycetes</taxon>
        <taxon>Saccharomycetales</taxon>
        <taxon>Saccharomycetaceae</taxon>
        <taxon>Eremothecium</taxon>
    </lineage>
</organism>
<sequence>MSLEMDLIEWALNLRAAGGGVFGSGSEELDRVLKLHYRVTYHAFDRGTKRSVWEVLLAEAEKIDSSKGMELEQAVMGNVFGILYRQLGDETECARWLAKLGALRALRGEYPEFWALLLLENVCYREAIGVEDQQQVFRDVARLPKETHTLTWFYLERFLARVQCERWQAVKEFGGVPLAYLLEAVREEEGVDQWLLEQGRAILSRTRFPAASEKNSTMLEEFHAVLNYYLRKNNKPRSTEWEGFITDSLGVTFQSVNVSKAALTYYRRFGDTKLALLNLLNFFNYSERFRRMNNGFYDDIVSLLDAYTFVLQLTSLPEAIGDIFNKAKAFEQLRNILQEFYRDYRLQQIPKEHSADWLSNSAKVVVPPKLARLLSDSWFLLYRIERNSLKPTLDFSLTYYLANAMCINPLNIDVKFHYAYVLASIRRIDMCIRFLKTNILNIKPADYRSWHLLALCESIQEDKDVSFKIVCSVLKAMAEAHEESNLLKADKWQFIHIKLTQLVLVKEMFGVKDALEMLSEVYQLYASLFPASKVNKTKDESRLGPAHNQTKEYLFQAIWFFSARLFLQDGDAQNAREAIDEAKRVTDTFTNLNVNITHGYLKLHCDPKGAMSEFQNALSFDPTNVDAVVGLAKLLYPEDQGSLERIARHRPIIGTATPKPESDPFANSKDRSAAVAQLKMLLENCIEKSIDGYHTPEVWWYLSRIYDEFHDNERLESALWQCIKFHELEPIRDFKYCMF</sequence>
<keyword id="KW-1003">Cell membrane</keyword>
<keyword id="KW-0254">Endocytosis</keyword>
<keyword id="KW-0472">Membrane</keyword>
<keyword id="KW-1185">Reference proteome</keyword>
<proteinExistence type="inferred from homology"/>
<accession>Q75CN2</accession>
<feature type="chain" id="PRO_0000308806" description="Cargo-transport protein YPP1">
    <location>
        <begin position="1"/>
        <end position="739"/>
    </location>
</feature>
<reference key="1">
    <citation type="journal article" date="2004" name="Science">
        <title>The Ashbya gossypii genome as a tool for mapping the ancient Saccharomyces cerevisiae genome.</title>
        <authorList>
            <person name="Dietrich F.S."/>
            <person name="Voegeli S."/>
            <person name="Brachat S."/>
            <person name="Lerch A."/>
            <person name="Gates K."/>
            <person name="Steiner S."/>
            <person name="Mohr C."/>
            <person name="Poehlmann R."/>
            <person name="Luedi P."/>
            <person name="Choi S."/>
            <person name="Wing R.A."/>
            <person name="Flavier A."/>
            <person name="Gaffney T.D."/>
            <person name="Philippsen P."/>
        </authorList>
    </citation>
    <scope>NUCLEOTIDE SEQUENCE [LARGE SCALE GENOMIC DNA]</scope>
    <source>
        <strain>ATCC 10895 / CBS 109.51 / FGSC 9923 / NRRL Y-1056</strain>
    </source>
</reference>
<reference key="2">
    <citation type="journal article" date="2013" name="G3 (Bethesda)">
        <title>Genomes of Ashbya fungi isolated from insects reveal four mating-type loci, numerous translocations, lack of transposons, and distinct gene duplications.</title>
        <authorList>
            <person name="Dietrich F.S."/>
            <person name="Voegeli S."/>
            <person name="Kuo S."/>
            <person name="Philippsen P."/>
        </authorList>
    </citation>
    <scope>GENOME REANNOTATION</scope>
    <source>
        <strain>ATCC 10895 / CBS 109.51 / FGSC 9923 / NRRL Y-1056</strain>
    </source>
</reference>